<gene>
    <name evidence="1" type="primary">tilS</name>
    <name type="ordered locus">LIC_10131</name>
</gene>
<evidence type="ECO:0000255" key="1">
    <source>
        <dbReference type="HAMAP-Rule" id="MF_01161"/>
    </source>
</evidence>
<protein>
    <recommendedName>
        <fullName evidence="1">tRNA(Ile)-lysidine synthase</fullName>
        <ecNumber evidence="1">6.3.4.19</ecNumber>
    </recommendedName>
    <alternativeName>
        <fullName evidence="1">tRNA(Ile)-2-lysyl-cytidine synthase</fullName>
    </alternativeName>
    <alternativeName>
        <fullName evidence="1">tRNA(Ile)-lysidine synthetase</fullName>
    </alternativeName>
</protein>
<accession>Q72W10</accession>
<feature type="chain" id="PRO_0000181714" description="tRNA(Ile)-lysidine synthase">
    <location>
        <begin position="1"/>
        <end position="433"/>
    </location>
</feature>
<feature type="binding site" evidence="1">
    <location>
        <begin position="37"/>
        <end position="42"/>
    </location>
    <ligand>
        <name>ATP</name>
        <dbReference type="ChEBI" id="CHEBI:30616"/>
    </ligand>
</feature>
<keyword id="KW-0067">ATP-binding</keyword>
<keyword id="KW-0963">Cytoplasm</keyword>
<keyword id="KW-0436">Ligase</keyword>
<keyword id="KW-0547">Nucleotide-binding</keyword>
<keyword id="KW-0819">tRNA processing</keyword>
<name>TILS_LEPIC</name>
<sequence>MRDKISESTQKIFHAVWERIAPFHEMIQSRPAVLSYSGGKDSSILLHFYFWLWIEKKIPAPCIYHLDHSIRFNLEQEKKIFEYADSTFPFSKIFKKKNIPALSRRLGKTLEETGRAFRYKDLKKISDQYEGYIVTGHHSSDYLETILLNLIRGGGWNSLRTLGWYEKNRFRPLFAFSQEEIETILQSEFWKIFEDESNNSDEYLRNRIRSYIIPLLLREGANPDRIYKNFHRIEKPVSKIFSKKNSDHKIPSFLKIDIWVLNDLSQRERKFFIDRYLRSLNLYPTTRNFFRDLTDLLQKENSFSLENKETWFWKSTSSDLYLIPKNSPCLREFRFEPKEMVLKWNGNQKKIPPDLIPDLCPAGAKIRKNGMSIEISEILRQKEIPVPVRKMLPILRGERKVDVICLSLWDPKIGDIVADREVEILPDFQEPGV</sequence>
<organism>
    <name type="scientific">Leptospira interrogans serogroup Icterohaemorrhagiae serovar copenhageni (strain Fiocruz L1-130)</name>
    <dbReference type="NCBI Taxonomy" id="267671"/>
    <lineage>
        <taxon>Bacteria</taxon>
        <taxon>Pseudomonadati</taxon>
        <taxon>Spirochaetota</taxon>
        <taxon>Spirochaetia</taxon>
        <taxon>Leptospirales</taxon>
        <taxon>Leptospiraceae</taxon>
        <taxon>Leptospira</taxon>
    </lineage>
</organism>
<comment type="function">
    <text evidence="1">Ligates lysine onto the cytidine present at position 34 of the AUA codon-specific tRNA(Ile) that contains the anticodon CAU, in an ATP-dependent manner. Cytidine is converted to lysidine, thus changing the amino acid specificity of the tRNA from methionine to isoleucine.</text>
</comment>
<comment type="catalytic activity">
    <reaction evidence="1">
        <text>cytidine(34) in tRNA(Ile2) + L-lysine + ATP = lysidine(34) in tRNA(Ile2) + AMP + diphosphate + H(+)</text>
        <dbReference type="Rhea" id="RHEA:43744"/>
        <dbReference type="Rhea" id="RHEA-COMP:10625"/>
        <dbReference type="Rhea" id="RHEA-COMP:10670"/>
        <dbReference type="ChEBI" id="CHEBI:15378"/>
        <dbReference type="ChEBI" id="CHEBI:30616"/>
        <dbReference type="ChEBI" id="CHEBI:32551"/>
        <dbReference type="ChEBI" id="CHEBI:33019"/>
        <dbReference type="ChEBI" id="CHEBI:82748"/>
        <dbReference type="ChEBI" id="CHEBI:83665"/>
        <dbReference type="ChEBI" id="CHEBI:456215"/>
        <dbReference type="EC" id="6.3.4.19"/>
    </reaction>
</comment>
<comment type="subcellular location">
    <subcellularLocation>
        <location evidence="1">Cytoplasm</location>
    </subcellularLocation>
</comment>
<comment type="domain">
    <text>The N-terminal region contains the highly conserved SGGXDS motif, predicted to be a P-loop motif involved in ATP binding.</text>
</comment>
<comment type="similarity">
    <text evidence="1">Belongs to the tRNA(Ile)-lysidine synthase family.</text>
</comment>
<dbReference type="EC" id="6.3.4.19" evidence="1"/>
<dbReference type="EMBL" id="AE016823">
    <property type="protein sequence ID" value="AAS68764.1"/>
    <property type="molecule type" value="Genomic_DNA"/>
</dbReference>
<dbReference type="RefSeq" id="WP_001205041.1">
    <property type="nucleotide sequence ID" value="NC_005823.1"/>
</dbReference>
<dbReference type="SMR" id="Q72W10"/>
<dbReference type="GeneID" id="61143486"/>
<dbReference type="KEGG" id="lic:LIC_10131"/>
<dbReference type="HOGENOM" id="CLU_018869_0_1_12"/>
<dbReference type="Proteomes" id="UP000007037">
    <property type="component" value="Chromosome I"/>
</dbReference>
<dbReference type="GO" id="GO:0005737">
    <property type="term" value="C:cytoplasm"/>
    <property type="evidence" value="ECO:0007669"/>
    <property type="project" value="UniProtKB-SubCell"/>
</dbReference>
<dbReference type="GO" id="GO:0005524">
    <property type="term" value="F:ATP binding"/>
    <property type="evidence" value="ECO:0007669"/>
    <property type="project" value="UniProtKB-UniRule"/>
</dbReference>
<dbReference type="GO" id="GO:0032267">
    <property type="term" value="F:tRNA(Ile)-lysidine synthase activity"/>
    <property type="evidence" value="ECO:0007669"/>
    <property type="project" value="UniProtKB-EC"/>
</dbReference>
<dbReference type="GO" id="GO:0006400">
    <property type="term" value="P:tRNA modification"/>
    <property type="evidence" value="ECO:0007669"/>
    <property type="project" value="UniProtKB-UniRule"/>
</dbReference>
<dbReference type="CDD" id="cd01992">
    <property type="entry name" value="TilS_N"/>
    <property type="match status" value="1"/>
</dbReference>
<dbReference type="Gene3D" id="3.40.50.620">
    <property type="entry name" value="HUPs"/>
    <property type="match status" value="1"/>
</dbReference>
<dbReference type="HAMAP" id="MF_01161">
    <property type="entry name" value="tRNA_Ile_lys_synt"/>
    <property type="match status" value="1"/>
</dbReference>
<dbReference type="InterPro" id="IPR014729">
    <property type="entry name" value="Rossmann-like_a/b/a_fold"/>
</dbReference>
<dbReference type="InterPro" id="IPR011063">
    <property type="entry name" value="TilS/TtcA_N"/>
</dbReference>
<dbReference type="InterPro" id="IPR012094">
    <property type="entry name" value="tRNA_Ile_lys_synt"/>
</dbReference>
<dbReference type="InterPro" id="IPR012795">
    <property type="entry name" value="tRNA_Ile_lys_synt_N"/>
</dbReference>
<dbReference type="NCBIfam" id="TIGR02432">
    <property type="entry name" value="lysidine_TilS_N"/>
    <property type="match status" value="1"/>
</dbReference>
<dbReference type="PANTHER" id="PTHR43033">
    <property type="entry name" value="TRNA(ILE)-LYSIDINE SYNTHASE-RELATED"/>
    <property type="match status" value="1"/>
</dbReference>
<dbReference type="PANTHER" id="PTHR43033:SF1">
    <property type="entry name" value="TRNA(ILE)-LYSIDINE SYNTHASE-RELATED"/>
    <property type="match status" value="1"/>
</dbReference>
<dbReference type="Pfam" id="PF01171">
    <property type="entry name" value="ATP_bind_3"/>
    <property type="match status" value="1"/>
</dbReference>
<dbReference type="SUPFAM" id="SSF52402">
    <property type="entry name" value="Adenine nucleotide alpha hydrolases-like"/>
    <property type="match status" value="1"/>
</dbReference>
<reference key="1">
    <citation type="journal article" date="2004" name="J. Bacteriol.">
        <title>Comparative genomics of two Leptospira interrogans serovars reveals novel insights into physiology and pathogenesis.</title>
        <authorList>
            <person name="Nascimento A.L.T.O."/>
            <person name="Ko A.I."/>
            <person name="Martins E.A.L."/>
            <person name="Monteiro-Vitorello C.B."/>
            <person name="Ho P.L."/>
            <person name="Haake D.A."/>
            <person name="Verjovski-Almeida S."/>
            <person name="Hartskeerl R.A."/>
            <person name="Marques M.V."/>
            <person name="Oliveira M.C."/>
            <person name="Menck C.F.M."/>
            <person name="Leite L.C.C."/>
            <person name="Carrer H."/>
            <person name="Coutinho L.L."/>
            <person name="Degrave W.M."/>
            <person name="Dellagostin O.A."/>
            <person name="El-Dorry H."/>
            <person name="Ferro E.S."/>
            <person name="Ferro M.I.T."/>
            <person name="Furlan L.R."/>
            <person name="Gamberini M."/>
            <person name="Giglioti E.A."/>
            <person name="Goes-Neto A."/>
            <person name="Goldman G.H."/>
            <person name="Goldman M.H.S."/>
            <person name="Harakava R."/>
            <person name="Jeronimo S.M.B."/>
            <person name="Junqueira-de-Azevedo I.L.M."/>
            <person name="Kimura E.T."/>
            <person name="Kuramae E.E."/>
            <person name="Lemos E.G.M."/>
            <person name="Lemos M.V.F."/>
            <person name="Marino C.L."/>
            <person name="Nunes L.R."/>
            <person name="de Oliveira R.C."/>
            <person name="Pereira G.G."/>
            <person name="Reis M.S."/>
            <person name="Schriefer A."/>
            <person name="Siqueira W.J."/>
            <person name="Sommer P."/>
            <person name="Tsai S.M."/>
            <person name="Simpson A.J.G."/>
            <person name="Ferro J.A."/>
            <person name="Camargo L.E.A."/>
            <person name="Kitajima J.P."/>
            <person name="Setubal J.C."/>
            <person name="Van Sluys M.A."/>
        </authorList>
    </citation>
    <scope>NUCLEOTIDE SEQUENCE [LARGE SCALE GENOMIC DNA]</scope>
    <source>
        <strain>Fiocruz L1-130</strain>
    </source>
</reference>
<proteinExistence type="inferred from homology"/>